<reference key="1">
    <citation type="journal article" date="1999" name="Nature">
        <title>Sequence and analysis of chromosome 2 of the plant Arabidopsis thaliana.</title>
        <authorList>
            <person name="Lin X."/>
            <person name="Kaul S."/>
            <person name="Rounsley S.D."/>
            <person name="Shea T.P."/>
            <person name="Benito M.-I."/>
            <person name="Town C.D."/>
            <person name="Fujii C.Y."/>
            <person name="Mason T.M."/>
            <person name="Bowman C.L."/>
            <person name="Barnstead M.E."/>
            <person name="Feldblyum T.V."/>
            <person name="Buell C.R."/>
            <person name="Ketchum K.A."/>
            <person name="Lee J.J."/>
            <person name="Ronning C.M."/>
            <person name="Koo H.L."/>
            <person name="Moffat K.S."/>
            <person name="Cronin L.A."/>
            <person name="Shen M."/>
            <person name="Pai G."/>
            <person name="Van Aken S."/>
            <person name="Umayam L."/>
            <person name="Tallon L.J."/>
            <person name="Gill J.E."/>
            <person name="Adams M.D."/>
            <person name="Carrera A.J."/>
            <person name="Creasy T.H."/>
            <person name="Goodman H.M."/>
            <person name="Somerville C.R."/>
            <person name="Copenhaver G.P."/>
            <person name="Preuss D."/>
            <person name="Nierman W.C."/>
            <person name="White O."/>
            <person name="Eisen J.A."/>
            <person name="Salzberg S.L."/>
            <person name="Fraser C.M."/>
            <person name="Venter J.C."/>
        </authorList>
    </citation>
    <scope>NUCLEOTIDE SEQUENCE [LARGE SCALE GENOMIC DNA]</scope>
    <source>
        <strain>cv. Columbia</strain>
    </source>
</reference>
<reference key="2">
    <citation type="journal article" date="2017" name="Plant J.">
        <title>Araport11: a complete reannotation of the Arabidopsis thaliana reference genome.</title>
        <authorList>
            <person name="Cheng C.Y."/>
            <person name="Krishnakumar V."/>
            <person name="Chan A.P."/>
            <person name="Thibaud-Nissen F."/>
            <person name="Schobel S."/>
            <person name="Town C.D."/>
        </authorList>
    </citation>
    <scope>GENOME REANNOTATION</scope>
    <source>
        <strain>cv. Columbia</strain>
    </source>
</reference>
<reference key="3">
    <citation type="journal article" date="2000" name="Plant Mol. Biol.">
        <title>In Arabidopsis thaliana, 1% of the genome codes for a novel protein family unique to plants.</title>
        <authorList>
            <person name="Aubourg S."/>
            <person name="Boudet N."/>
            <person name="Kreis M."/>
            <person name="Lecharny A."/>
        </authorList>
    </citation>
    <scope>GENE FAMILY</scope>
</reference>
<reference key="4">
    <citation type="journal article" date="2004" name="Plant Cell">
        <title>Genome-wide analysis of Arabidopsis pentatricopeptide repeat proteins reveals their essential role in organelle biogenesis.</title>
        <authorList>
            <person name="Lurin C."/>
            <person name="Andres C."/>
            <person name="Aubourg S."/>
            <person name="Bellaoui M."/>
            <person name="Bitton F."/>
            <person name="Bruyere C."/>
            <person name="Caboche M."/>
            <person name="Debast C."/>
            <person name="Gualberto J."/>
            <person name="Hoffmann B."/>
            <person name="Lecharny A."/>
            <person name="Le Ret M."/>
            <person name="Martin-Magniette M.-L."/>
            <person name="Mireau H."/>
            <person name="Peeters N."/>
            <person name="Renou J.-P."/>
            <person name="Szurek B."/>
            <person name="Taconnat L."/>
            <person name="Small I."/>
        </authorList>
    </citation>
    <scope>GENE FAMILY</scope>
</reference>
<name>PP140_ARATH</name>
<comment type="subcellular location">
    <subcellularLocation>
        <location evidence="2">Mitochondrion</location>
    </subcellularLocation>
</comment>
<comment type="similarity">
    <text evidence="2">Belongs to the PPR family. PCMP-H subfamily.</text>
</comment>
<comment type="online information" name="Pentatricopeptide repeat proteins">
    <link uri="https://ppr.plantenergy.uwa.edu.au"/>
</comment>
<organism>
    <name type="scientific">Arabidopsis thaliana</name>
    <name type="common">Mouse-ear cress</name>
    <dbReference type="NCBI Taxonomy" id="3702"/>
    <lineage>
        <taxon>Eukaryota</taxon>
        <taxon>Viridiplantae</taxon>
        <taxon>Streptophyta</taxon>
        <taxon>Embryophyta</taxon>
        <taxon>Tracheophyta</taxon>
        <taxon>Spermatophyta</taxon>
        <taxon>Magnoliopsida</taxon>
        <taxon>eudicotyledons</taxon>
        <taxon>Gunneridae</taxon>
        <taxon>Pentapetalae</taxon>
        <taxon>rosids</taxon>
        <taxon>malvids</taxon>
        <taxon>Brassicales</taxon>
        <taxon>Brassicaceae</taxon>
        <taxon>Camelineae</taxon>
        <taxon>Arabidopsis</taxon>
    </lineage>
</organism>
<evidence type="ECO:0000255" key="1"/>
<evidence type="ECO:0000305" key="2"/>
<accession>Q9ZVF4</accession>
<dbReference type="EMBL" id="AC005560">
    <property type="protein sequence ID" value="AAC67327.1"/>
    <property type="molecule type" value="Genomic_DNA"/>
</dbReference>
<dbReference type="EMBL" id="CP002685">
    <property type="protein sequence ID" value="AEC05463.1"/>
    <property type="molecule type" value="Genomic_DNA"/>
</dbReference>
<dbReference type="EMBL" id="CP002685">
    <property type="protein sequence ID" value="ANM62267.1"/>
    <property type="molecule type" value="Genomic_DNA"/>
</dbReference>
<dbReference type="PIR" id="F84425">
    <property type="entry name" value="F84425"/>
</dbReference>
<dbReference type="RefSeq" id="NP_001324437.1">
    <property type="nucleotide sequence ID" value="NM_001335067.1"/>
</dbReference>
<dbReference type="RefSeq" id="NP_178260.1">
    <property type="nucleotide sequence ID" value="NM_126212.2"/>
</dbReference>
<dbReference type="SMR" id="Q9ZVF4"/>
<dbReference type="FunCoup" id="Q9ZVF4">
    <property type="interactions" value="80"/>
</dbReference>
<dbReference type="STRING" id="3702.Q9ZVF4"/>
<dbReference type="PaxDb" id="3702-AT2G01510.1"/>
<dbReference type="ProteomicsDB" id="249070"/>
<dbReference type="EnsemblPlants" id="AT2G01510.1">
    <property type="protein sequence ID" value="AT2G01510.1"/>
    <property type="gene ID" value="AT2G01510"/>
</dbReference>
<dbReference type="EnsemblPlants" id="AT2G01510.2">
    <property type="protein sequence ID" value="AT2G01510.2"/>
    <property type="gene ID" value="AT2G01510"/>
</dbReference>
<dbReference type="GeneID" id="814680"/>
<dbReference type="Gramene" id="AT2G01510.1">
    <property type="protein sequence ID" value="AT2G01510.1"/>
    <property type="gene ID" value="AT2G01510"/>
</dbReference>
<dbReference type="Gramene" id="AT2G01510.2">
    <property type="protein sequence ID" value="AT2G01510.2"/>
    <property type="gene ID" value="AT2G01510"/>
</dbReference>
<dbReference type="KEGG" id="ath:AT2G01510"/>
<dbReference type="Araport" id="AT2G01510"/>
<dbReference type="TAIR" id="AT2G01510"/>
<dbReference type="eggNOG" id="KOG4197">
    <property type="taxonomic scope" value="Eukaryota"/>
</dbReference>
<dbReference type="HOGENOM" id="CLU_002706_15_10_1"/>
<dbReference type="InParanoid" id="Q9ZVF4"/>
<dbReference type="OMA" id="ENARLDM"/>
<dbReference type="PhylomeDB" id="Q9ZVF4"/>
<dbReference type="PRO" id="PR:Q9ZVF4"/>
<dbReference type="Proteomes" id="UP000006548">
    <property type="component" value="Chromosome 2"/>
</dbReference>
<dbReference type="ExpressionAtlas" id="Q9ZVF4">
    <property type="expression patterns" value="baseline and differential"/>
</dbReference>
<dbReference type="GO" id="GO:0005739">
    <property type="term" value="C:mitochondrion"/>
    <property type="evidence" value="ECO:0007669"/>
    <property type="project" value="UniProtKB-SubCell"/>
</dbReference>
<dbReference type="GO" id="GO:0003723">
    <property type="term" value="F:RNA binding"/>
    <property type="evidence" value="ECO:0007669"/>
    <property type="project" value="InterPro"/>
</dbReference>
<dbReference type="GO" id="GO:0008270">
    <property type="term" value="F:zinc ion binding"/>
    <property type="evidence" value="ECO:0007669"/>
    <property type="project" value="InterPro"/>
</dbReference>
<dbReference type="GO" id="GO:0009451">
    <property type="term" value="P:RNA modification"/>
    <property type="evidence" value="ECO:0007669"/>
    <property type="project" value="InterPro"/>
</dbReference>
<dbReference type="FunFam" id="1.25.40.10:FF:000366">
    <property type="entry name" value="Pentatricopeptide (PPR) repeat-containing protein"/>
    <property type="match status" value="1"/>
</dbReference>
<dbReference type="FunFam" id="1.25.40.10:FF:000344">
    <property type="entry name" value="Pentatricopeptide repeat-containing protein"/>
    <property type="match status" value="1"/>
</dbReference>
<dbReference type="FunFam" id="1.25.40.10:FF:000031">
    <property type="entry name" value="Pentatricopeptide repeat-containing protein mitochondrial"/>
    <property type="match status" value="1"/>
</dbReference>
<dbReference type="Gene3D" id="1.25.40.10">
    <property type="entry name" value="Tetratricopeptide repeat domain"/>
    <property type="match status" value="3"/>
</dbReference>
<dbReference type="InterPro" id="IPR032867">
    <property type="entry name" value="DYW_dom"/>
</dbReference>
<dbReference type="InterPro" id="IPR046848">
    <property type="entry name" value="E_motif"/>
</dbReference>
<dbReference type="InterPro" id="IPR046849">
    <property type="entry name" value="Eplus_motif"/>
</dbReference>
<dbReference type="InterPro" id="IPR002885">
    <property type="entry name" value="Pentatricopeptide_rpt"/>
</dbReference>
<dbReference type="InterPro" id="IPR046960">
    <property type="entry name" value="PPR_At4g14850-like_plant"/>
</dbReference>
<dbReference type="InterPro" id="IPR011990">
    <property type="entry name" value="TPR-like_helical_dom_sf"/>
</dbReference>
<dbReference type="NCBIfam" id="TIGR00756">
    <property type="entry name" value="PPR"/>
    <property type="match status" value="2"/>
</dbReference>
<dbReference type="PANTHER" id="PTHR47926:SF355">
    <property type="entry name" value="DYW DOMAIN-CONTAINING PROTEIN"/>
    <property type="match status" value="1"/>
</dbReference>
<dbReference type="PANTHER" id="PTHR47926">
    <property type="entry name" value="PENTATRICOPEPTIDE REPEAT-CONTAINING PROTEIN"/>
    <property type="match status" value="1"/>
</dbReference>
<dbReference type="Pfam" id="PF14432">
    <property type="entry name" value="DYW_deaminase"/>
    <property type="match status" value="1"/>
</dbReference>
<dbReference type="Pfam" id="PF20431">
    <property type="entry name" value="E_motif"/>
    <property type="match status" value="1"/>
</dbReference>
<dbReference type="Pfam" id="PF20430">
    <property type="entry name" value="Eplus_motif"/>
    <property type="match status" value="1"/>
</dbReference>
<dbReference type="Pfam" id="PF01535">
    <property type="entry name" value="PPR"/>
    <property type="match status" value="3"/>
</dbReference>
<dbReference type="Pfam" id="PF13041">
    <property type="entry name" value="PPR_2"/>
    <property type="match status" value="2"/>
</dbReference>
<dbReference type="PROSITE" id="PS51375">
    <property type="entry name" value="PPR"/>
    <property type="match status" value="9"/>
</dbReference>
<proteinExistence type="inferred from homology"/>
<protein>
    <recommendedName>
        <fullName>Pentatricopeptide repeat-containing protein At2g01510, mitochondrial</fullName>
    </recommendedName>
</protein>
<keyword id="KW-0496">Mitochondrion</keyword>
<keyword id="KW-1185">Reference proteome</keyword>
<keyword id="KW-0677">Repeat</keyword>
<keyword id="KW-0809">Transit peptide</keyword>
<sequence length="584" mass="66072">MLAKQTPLTKQMLSELLRASSSKPKQLKKIHAIVLRTGFSEKNSLLTQLLENLVVIGDMCYARQVFDEMHKPRIFLWNTLFKGYVRNQLPFESLLLYKKMRDLGVRPDEFTYPFVVKAISQLGDFSCGFALHAHVVKYGFGCLGIVATELVMMYMKFGELSSAEFLFESMQVKDLVAWNAFLAVCVQTGNSAIALEYFNKMCADAVQFDSFTVVSMLSACGQLGSLEIGEEIYDRARKEEIDCNIIVENARLDMHLKCGNTEAARVLFEEMKQRNVVSWSTMIVGYAMNGDSREALTLFTTMQNEGLRPNYVTFLGVLSACSHAGLVNEGKRYFSLMVQSNDKNLEPRKEHYACMVDLLGRSGLLEEAYEFIKKMPVEPDTGIWGALLGACAVHRDMILGQKVADVLVETAPDIGSYHVLLSNIYAAAGKWDCVDKVRSKMRKLGTKKVAAYSSVEFEGKIHFFNRGDKSHPQSKAIYEKLDEILKKIRKMGYVPDTCSVFHDVEMEEKECSLSHHSEKLAIAFGLIKGRPGHPIRVMKNLRTCDDCHAFSKFVSSLTSTEIIMRDKNRFHHFRNGVCSCKEFW</sequence>
<gene>
    <name type="primary">PCMP-H37</name>
    <name type="ordered locus">At2g01510</name>
    <name type="ORF">F2I9.13</name>
</gene>
<feature type="transit peptide" description="Mitochondrion" evidence="1">
    <location>
        <begin position="1"/>
        <end position="20"/>
    </location>
</feature>
<feature type="chain" id="PRO_0000356000" description="Pentatricopeptide repeat-containing protein At2g01510, mitochondrial">
    <location>
        <begin position="21"/>
        <end position="584"/>
    </location>
</feature>
<feature type="repeat" description="PPR 1">
    <location>
        <begin position="73"/>
        <end position="107"/>
    </location>
</feature>
<feature type="repeat" description="PPR 2">
    <location>
        <begin position="108"/>
        <end position="142"/>
    </location>
</feature>
<feature type="repeat" description="PPR 3">
    <location>
        <begin position="143"/>
        <end position="173"/>
    </location>
</feature>
<feature type="repeat" description="PPR 4">
    <location>
        <begin position="174"/>
        <end position="208"/>
    </location>
</feature>
<feature type="repeat" description="PPR 5">
    <location>
        <begin position="209"/>
        <end position="243"/>
    </location>
</feature>
<feature type="repeat" description="PPR 6">
    <location>
        <begin position="244"/>
        <end position="274"/>
    </location>
</feature>
<feature type="repeat" description="PPR 7">
    <location>
        <begin position="275"/>
        <end position="309"/>
    </location>
</feature>
<feature type="repeat" description="PPR 8">
    <location>
        <begin position="310"/>
        <end position="344"/>
    </location>
</feature>
<feature type="repeat" description="PPR 9">
    <location>
        <begin position="348"/>
        <end position="378"/>
    </location>
</feature>
<feature type="region of interest" description="Type E motif">
    <location>
        <begin position="383"/>
        <end position="458"/>
    </location>
</feature>
<feature type="region of interest" description="Type E(+) motif">
    <location>
        <begin position="459"/>
        <end position="489"/>
    </location>
</feature>
<feature type="region of interest" description="Type DYW motif">
    <location>
        <begin position="490"/>
        <end position="584"/>
    </location>
</feature>